<proteinExistence type="inferred from homology"/>
<keyword id="KW-0413">Isomerase</keyword>
<keyword id="KW-0460">Magnesium</keyword>
<keyword id="KW-0479">Metal-binding</keyword>
<keyword id="KW-0597">Phosphoprotein</keyword>
<gene>
    <name evidence="1" type="primary">glmM</name>
    <name type="ordered locus">Pcryo_1006</name>
</gene>
<evidence type="ECO:0000255" key="1">
    <source>
        <dbReference type="HAMAP-Rule" id="MF_01554"/>
    </source>
</evidence>
<dbReference type="EC" id="5.4.2.10" evidence="1"/>
<dbReference type="EMBL" id="CP000323">
    <property type="protein sequence ID" value="ABE74787.1"/>
    <property type="molecule type" value="Genomic_DNA"/>
</dbReference>
<dbReference type="RefSeq" id="WP_011513345.1">
    <property type="nucleotide sequence ID" value="NC_007969.1"/>
</dbReference>
<dbReference type="SMR" id="Q1QC16"/>
<dbReference type="STRING" id="335284.Pcryo_1006"/>
<dbReference type="KEGG" id="pcr:Pcryo_1006"/>
<dbReference type="eggNOG" id="COG1109">
    <property type="taxonomic scope" value="Bacteria"/>
</dbReference>
<dbReference type="HOGENOM" id="CLU_016950_7_0_6"/>
<dbReference type="Proteomes" id="UP000002425">
    <property type="component" value="Chromosome"/>
</dbReference>
<dbReference type="GO" id="GO:0005829">
    <property type="term" value="C:cytosol"/>
    <property type="evidence" value="ECO:0007669"/>
    <property type="project" value="TreeGrafter"/>
</dbReference>
<dbReference type="GO" id="GO:0000287">
    <property type="term" value="F:magnesium ion binding"/>
    <property type="evidence" value="ECO:0007669"/>
    <property type="project" value="UniProtKB-UniRule"/>
</dbReference>
<dbReference type="GO" id="GO:0008966">
    <property type="term" value="F:phosphoglucosamine mutase activity"/>
    <property type="evidence" value="ECO:0007669"/>
    <property type="project" value="UniProtKB-UniRule"/>
</dbReference>
<dbReference type="GO" id="GO:0004615">
    <property type="term" value="F:phosphomannomutase activity"/>
    <property type="evidence" value="ECO:0007669"/>
    <property type="project" value="TreeGrafter"/>
</dbReference>
<dbReference type="GO" id="GO:0005975">
    <property type="term" value="P:carbohydrate metabolic process"/>
    <property type="evidence" value="ECO:0007669"/>
    <property type="project" value="InterPro"/>
</dbReference>
<dbReference type="GO" id="GO:0009252">
    <property type="term" value="P:peptidoglycan biosynthetic process"/>
    <property type="evidence" value="ECO:0007669"/>
    <property type="project" value="TreeGrafter"/>
</dbReference>
<dbReference type="GO" id="GO:0006048">
    <property type="term" value="P:UDP-N-acetylglucosamine biosynthetic process"/>
    <property type="evidence" value="ECO:0007669"/>
    <property type="project" value="TreeGrafter"/>
</dbReference>
<dbReference type="CDD" id="cd05802">
    <property type="entry name" value="GlmM"/>
    <property type="match status" value="1"/>
</dbReference>
<dbReference type="FunFam" id="3.30.310.50:FF:000001">
    <property type="entry name" value="Phosphoglucosamine mutase"/>
    <property type="match status" value="1"/>
</dbReference>
<dbReference type="FunFam" id="3.40.120.10:FF:000001">
    <property type="entry name" value="Phosphoglucosamine mutase"/>
    <property type="match status" value="1"/>
</dbReference>
<dbReference type="FunFam" id="3.40.120.10:FF:000003">
    <property type="entry name" value="Phosphoglucosamine mutase"/>
    <property type="match status" value="1"/>
</dbReference>
<dbReference type="Gene3D" id="3.40.120.10">
    <property type="entry name" value="Alpha-D-Glucose-1,6-Bisphosphate, subunit A, domain 3"/>
    <property type="match status" value="3"/>
</dbReference>
<dbReference type="Gene3D" id="3.30.310.50">
    <property type="entry name" value="Alpha-D-phosphohexomutase, C-terminal domain"/>
    <property type="match status" value="1"/>
</dbReference>
<dbReference type="HAMAP" id="MF_01554_B">
    <property type="entry name" value="GlmM_B"/>
    <property type="match status" value="1"/>
</dbReference>
<dbReference type="InterPro" id="IPR005844">
    <property type="entry name" value="A-D-PHexomutase_a/b/a-I"/>
</dbReference>
<dbReference type="InterPro" id="IPR016055">
    <property type="entry name" value="A-D-PHexomutase_a/b/a-I/II/III"/>
</dbReference>
<dbReference type="InterPro" id="IPR005845">
    <property type="entry name" value="A-D-PHexomutase_a/b/a-II"/>
</dbReference>
<dbReference type="InterPro" id="IPR005846">
    <property type="entry name" value="A-D-PHexomutase_a/b/a-III"/>
</dbReference>
<dbReference type="InterPro" id="IPR005843">
    <property type="entry name" value="A-D-PHexomutase_C"/>
</dbReference>
<dbReference type="InterPro" id="IPR036900">
    <property type="entry name" value="A-D-PHexomutase_C_sf"/>
</dbReference>
<dbReference type="InterPro" id="IPR016066">
    <property type="entry name" value="A-D-PHexomutase_CS"/>
</dbReference>
<dbReference type="InterPro" id="IPR005841">
    <property type="entry name" value="Alpha-D-phosphohexomutase_SF"/>
</dbReference>
<dbReference type="InterPro" id="IPR006352">
    <property type="entry name" value="GlmM_bact"/>
</dbReference>
<dbReference type="InterPro" id="IPR050060">
    <property type="entry name" value="Phosphoglucosamine_mutase"/>
</dbReference>
<dbReference type="NCBIfam" id="TIGR01455">
    <property type="entry name" value="glmM"/>
    <property type="match status" value="1"/>
</dbReference>
<dbReference type="NCBIfam" id="NF008139">
    <property type="entry name" value="PRK10887.1"/>
    <property type="match status" value="1"/>
</dbReference>
<dbReference type="PANTHER" id="PTHR42946:SF1">
    <property type="entry name" value="PHOSPHOGLUCOMUTASE (ALPHA-D-GLUCOSE-1,6-BISPHOSPHATE-DEPENDENT)"/>
    <property type="match status" value="1"/>
</dbReference>
<dbReference type="PANTHER" id="PTHR42946">
    <property type="entry name" value="PHOSPHOHEXOSE MUTASE"/>
    <property type="match status" value="1"/>
</dbReference>
<dbReference type="Pfam" id="PF02878">
    <property type="entry name" value="PGM_PMM_I"/>
    <property type="match status" value="1"/>
</dbReference>
<dbReference type="Pfam" id="PF02879">
    <property type="entry name" value="PGM_PMM_II"/>
    <property type="match status" value="1"/>
</dbReference>
<dbReference type="Pfam" id="PF02880">
    <property type="entry name" value="PGM_PMM_III"/>
    <property type="match status" value="1"/>
</dbReference>
<dbReference type="Pfam" id="PF00408">
    <property type="entry name" value="PGM_PMM_IV"/>
    <property type="match status" value="1"/>
</dbReference>
<dbReference type="PRINTS" id="PR00509">
    <property type="entry name" value="PGMPMM"/>
</dbReference>
<dbReference type="SUPFAM" id="SSF55957">
    <property type="entry name" value="Phosphoglucomutase, C-terminal domain"/>
    <property type="match status" value="1"/>
</dbReference>
<dbReference type="SUPFAM" id="SSF53738">
    <property type="entry name" value="Phosphoglucomutase, first 3 domains"/>
    <property type="match status" value="3"/>
</dbReference>
<dbReference type="PROSITE" id="PS00710">
    <property type="entry name" value="PGM_PMM"/>
    <property type="match status" value="1"/>
</dbReference>
<accession>Q1QC16</accession>
<reference key="1">
    <citation type="submission" date="2006-03" db="EMBL/GenBank/DDBJ databases">
        <title>Complete sequence of chromosome of Psychrobacter cryohalolentis K5.</title>
        <authorList>
            <consortium name="US DOE Joint Genome Institute"/>
            <person name="Copeland A."/>
            <person name="Lucas S."/>
            <person name="Lapidus A."/>
            <person name="Barry K."/>
            <person name="Detter J.C."/>
            <person name="Glavina T."/>
            <person name="Hammon N."/>
            <person name="Israni S."/>
            <person name="Dalin E."/>
            <person name="Tice H."/>
            <person name="Pitluck S."/>
            <person name="Brettin T."/>
            <person name="Bruce D."/>
            <person name="Han C."/>
            <person name="Tapia R."/>
            <person name="Sims D.R."/>
            <person name="Gilna P."/>
            <person name="Schmutz J."/>
            <person name="Larimer F."/>
            <person name="Land M."/>
            <person name="Hauser L."/>
            <person name="Kyrpides N."/>
            <person name="Kim E."/>
            <person name="Richardson P."/>
        </authorList>
    </citation>
    <scope>NUCLEOTIDE SEQUENCE [LARGE SCALE GENOMIC DNA]</scope>
    <source>
        <strain>ATCC BAA-1226 / DSM 17306 / VKM B-2378 / K5</strain>
    </source>
</reference>
<organism>
    <name type="scientific">Psychrobacter cryohalolentis (strain ATCC BAA-1226 / DSM 17306 / VKM B-2378 / K5)</name>
    <dbReference type="NCBI Taxonomy" id="335284"/>
    <lineage>
        <taxon>Bacteria</taxon>
        <taxon>Pseudomonadati</taxon>
        <taxon>Pseudomonadota</taxon>
        <taxon>Gammaproteobacteria</taxon>
        <taxon>Moraxellales</taxon>
        <taxon>Moraxellaceae</taxon>
        <taxon>Psychrobacter</taxon>
    </lineage>
</organism>
<feature type="chain" id="PRO_0000301361" description="Phosphoglucosamine mutase">
    <location>
        <begin position="1"/>
        <end position="455"/>
    </location>
</feature>
<feature type="active site" description="Phosphoserine intermediate" evidence="1">
    <location>
        <position position="104"/>
    </location>
</feature>
<feature type="binding site" description="via phosphate group" evidence="1">
    <location>
        <position position="104"/>
    </location>
    <ligand>
        <name>Mg(2+)</name>
        <dbReference type="ChEBI" id="CHEBI:18420"/>
    </ligand>
</feature>
<feature type="binding site" evidence="1">
    <location>
        <position position="253"/>
    </location>
    <ligand>
        <name>Mg(2+)</name>
        <dbReference type="ChEBI" id="CHEBI:18420"/>
    </ligand>
</feature>
<feature type="binding site" evidence="1">
    <location>
        <position position="255"/>
    </location>
    <ligand>
        <name>Mg(2+)</name>
        <dbReference type="ChEBI" id="CHEBI:18420"/>
    </ligand>
</feature>
<feature type="binding site" evidence="1">
    <location>
        <position position="257"/>
    </location>
    <ligand>
        <name>Mg(2+)</name>
        <dbReference type="ChEBI" id="CHEBI:18420"/>
    </ligand>
</feature>
<feature type="modified residue" description="Phosphoserine" evidence="1">
    <location>
        <position position="104"/>
    </location>
</feature>
<protein>
    <recommendedName>
        <fullName evidence="1">Phosphoglucosamine mutase</fullName>
        <ecNumber evidence="1">5.4.2.10</ecNumber>
    </recommendedName>
</protein>
<name>GLMM_PSYCK</name>
<comment type="function">
    <text evidence="1">Catalyzes the conversion of glucosamine-6-phosphate to glucosamine-1-phosphate.</text>
</comment>
<comment type="catalytic activity">
    <reaction evidence="1">
        <text>alpha-D-glucosamine 1-phosphate = D-glucosamine 6-phosphate</text>
        <dbReference type="Rhea" id="RHEA:23424"/>
        <dbReference type="ChEBI" id="CHEBI:58516"/>
        <dbReference type="ChEBI" id="CHEBI:58725"/>
        <dbReference type="EC" id="5.4.2.10"/>
    </reaction>
</comment>
<comment type="cofactor">
    <cofactor evidence="1">
        <name>Mg(2+)</name>
        <dbReference type="ChEBI" id="CHEBI:18420"/>
    </cofactor>
    <text evidence="1">Binds 1 Mg(2+) ion per subunit.</text>
</comment>
<comment type="PTM">
    <text evidence="1">Activated by phosphorylation.</text>
</comment>
<comment type="similarity">
    <text evidence="1">Belongs to the phosphohexose mutase family.</text>
</comment>
<sequence length="455" mass="48850">MSYFGTDGIRGKFGELPITPDFILKLGYVTGLVLIENNQNSPRKPSVVIGKDTRLSGYVIEGALQAGFNAAGVDVYMLGPLPTPAIAHLTRSFNADAGVVISASHNPYYDNGIKFFSADGKKLTDAMQNAINDKLDAIMAVDGNNDAVMPILDPAQLGKNNRIDDAKGRYIEFCKGSFPYQYDLDHLTVVVDCANGAGYSVAPRVMRELGANVIAINNKPDGININADCGSTHPEGLQEAVLKYEADVGIALDGDGDRIVMVDEAGNLVDGDGILYVLATQGQTKVAGVVGTLMSNMGLELALKAADIEFTRAKVGDRYVMQELEANGWILGGEPSGHILCLDKSRTGDAIIASLQILAVMQARGKALSDLTEGFEVLPQKLVNVRLSQMQDPFEHEELVVAFDKARATLEGRGRLLIRQSGTEPMIRVMVESDDEIECDVMANDLADKIKAILG</sequence>